<sequence>MSQNRKDDHIKYALEQRPGYNSFDEMELVHRSLPKYDLAEIDLSTHFAGRDWEFPFYINAMTGGSQKGSQINEKLAQVAESCGLLFVTGSYSAALKNPSDTSYQVATGRPNLLLATNIGLDKPYQAAQQAVADLQPLFLQIHVNLMQELLMPEGEREFRSWRQHLTDYSQRLDLPLILKEVGFGMDRSTVEEARSLGIQTFDISGRGGTSFAYIENQRGGNRDYLNDWGQSTLQSLLALQPMRDEVELLASGGVRHPLDMIKALVLGAKAVGLSRAMLDLVKNYSVEEVIDIVEGWKSDLRLIMCALSCRNLQELKNVPYLLYGRLKEAQEQIK</sequence>
<accession>A8AUV1</accession>
<reference key="1">
    <citation type="journal article" date="2007" name="J. Bacteriol.">
        <title>Genome-wide transcriptional changes in Streptococcus gordonii in response to competence signaling peptide.</title>
        <authorList>
            <person name="Vickerman M.M."/>
            <person name="Iobst S."/>
            <person name="Jesionowski A.M."/>
            <person name="Gill S.R."/>
        </authorList>
    </citation>
    <scope>NUCLEOTIDE SEQUENCE [LARGE SCALE GENOMIC DNA]</scope>
    <source>
        <strain>Challis / ATCC 35105 / BCRC 15272 / CH1 / DL1 / V288</strain>
    </source>
</reference>
<name>IDI2_STRGC</name>
<evidence type="ECO:0000255" key="1">
    <source>
        <dbReference type="HAMAP-Rule" id="MF_00354"/>
    </source>
</evidence>
<comment type="function">
    <text evidence="1">Involved in the biosynthesis of isoprenoids. Catalyzes the 1,3-allylic rearrangement of the homoallylic substrate isopentenyl (IPP) to its allylic isomer, dimethylallyl diphosphate (DMAPP).</text>
</comment>
<comment type="catalytic activity">
    <reaction evidence="1">
        <text>isopentenyl diphosphate = dimethylallyl diphosphate</text>
        <dbReference type="Rhea" id="RHEA:23284"/>
        <dbReference type="ChEBI" id="CHEBI:57623"/>
        <dbReference type="ChEBI" id="CHEBI:128769"/>
        <dbReference type="EC" id="5.3.3.2"/>
    </reaction>
</comment>
<comment type="cofactor">
    <cofactor evidence="1">
        <name>FMN</name>
        <dbReference type="ChEBI" id="CHEBI:58210"/>
    </cofactor>
</comment>
<comment type="cofactor">
    <cofactor evidence="1">
        <name>NADPH</name>
        <dbReference type="ChEBI" id="CHEBI:57783"/>
    </cofactor>
</comment>
<comment type="cofactor">
    <cofactor evidence="1">
        <name>Mg(2+)</name>
        <dbReference type="ChEBI" id="CHEBI:18420"/>
    </cofactor>
</comment>
<comment type="subunit">
    <text evidence="1">Homooctamer. Dimer of tetramers.</text>
</comment>
<comment type="subcellular location">
    <subcellularLocation>
        <location evidence="1">Cytoplasm</location>
    </subcellularLocation>
</comment>
<comment type="similarity">
    <text evidence="1">Belongs to the IPP isomerase type 2 family.</text>
</comment>
<protein>
    <recommendedName>
        <fullName evidence="1">Isopentenyl-diphosphate delta-isomerase</fullName>
        <shortName evidence="1">IPP isomerase</shortName>
        <ecNumber evidence="1">5.3.3.2</ecNumber>
    </recommendedName>
    <alternativeName>
        <fullName evidence="1">Isopentenyl diphosphate:dimethylallyl diphosphate isomerase</fullName>
    </alternativeName>
    <alternativeName>
        <fullName evidence="1">Isopentenyl pyrophosphate isomerase</fullName>
    </alternativeName>
    <alternativeName>
        <fullName evidence="1">Type 2 isopentenyl diphosphate isomerase</fullName>
        <shortName evidence="1">IDI-2</shortName>
    </alternativeName>
</protein>
<proteinExistence type="inferred from homology"/>
<organism>
    <name type="scientific">Streptococcus gordonii (strain Challis / ATCC 35105 / BCRC 15272 / CH1 / DL1 / V288)</name>
    <dbReference type="NCBI Taxonomy" id="467705"/>
    <lineage>
        <taxon>Bacteria</taxon>
        <taxon>Bacillati</taxon>
        <taxon>Bacillota</taxon>
        <taxon>Bacilli</taxon>
        <taxon>Lactobacillales</taxon>
        <taxon>Streptococcaceae</taxon>
        <taxon>Streptococcus</taxon>
    </lineage>
</organism>
<keyword id="KW-0963">Cytoplasm</keyword>
<keyword id="KW-0285">Flavoprotein</keyword>
<keyword id="KW-0288">FMN</keyword>
<keyword id="KW-0413">Isomerase</keyword>
<keyword id="KW-0414">Isoprene biosynthesis</keyword>
<keyword id="KW-0460">Magnesium</keyword>
<keyword id="KW-0479">Metal-binding</keyword>
<keyword id="KW-0521">NADP</keyword>
<keyword id="KW-1185">Reference proteome</keyword>
<feature type="chain" id="PRO_1000079386" description="Isopentenyl-diphosphate delta-isomerase">
    <location>
        <begin position="1"/>
        <end position="334"/>
    </location>
</feature>
<feature type="binding site" evidence="1">
    <location>
        <begin position="5"/>
        <end position="6"/>
    </location>
    <ligand>
        <name>substrate</name>
    </ligand>
</feature>
<feature type="binding site" evidence="1">
    <location>
        <begin position="60"/>
        <end position="62"/>
    </location>
    <ligand>
        <name>FMN</name>
        <dbReference type="ChEBI" id="CHEBI:58210"/>
    </ligand>
</feature>
<feature type="binding site" evidence="1">
    <location>
        <position position="90"/>
    </location>
    <ligand>
        <name>FMN</name>
        <dbReference type="ChEBI" id="CHEBI:58210"/>
    </ligand>
</feature>
<feature type="binding site" evidence="1">
    <location>
        <position position="117"/>
    </location>
    <ligand>
        <name>FMN</name>
        <dbReference type="ChEBI" id="CHEBI:58210"/>
    </ligand>
</feature>
<feature type="binding site" evidence="1">
    <location>
        <position position="147"/>
    </location>
    <ligand>
        <name>substrate</name>
    </ligand>
</feature>
<feature type="binding site" evidence="1">
    <location>
        <position position="148"/>
    </location>
    <ligand>
        <name>Mg(2+)</name>
        <dbReference type="ChEBI" id="CHEBI:18420"/>
    </ligand>
</feature>
<feature type="binding site" evidence="1">
    <location>
        <position position="179"/>
    </location>
    <ligand>
        <name>FMN</name>
        <dbReference type="ChEBI" id="CHEBI:58210"/>
    </ligand>
</feature>
<feature type="binding site" evidence="1">
    <location>
        <position position="204"/>
    </location>
    <ligand>
        <name>FMN</name>
        <dbReference type="ChEBI" id="CHEBI:58210"/>
    </ligand>
</feature>
<feature type="binding site" evidence="1">
    <location>
        <position position="209"/>
    </location>
    <ligand>
        <name>FMN</name>
        <dbReference type="ChEBI" id="CHEBI:58210"/>
    </ligand>
</feature>
<feature type="binding site" evidence="1">
    <location>
        <begin position="253"/>
        <end position="255"/>
    </location>
    <ligand>
        <name>FMN</name>
        <dbReference type="ChEBI" id="CHEBI:58210"/>
    </ligand>
</feature>
<feature type="binding site" evidence="1">
    <location>
        <begin position="274"/>
        <end position="275"/>
    </location>
    <ligand>
        <name>FMN</name>
        <dbReference type="ChEBI" id="CHEBI:58210"/>
    </ligand>
</feature>
<dbReference type="EC" id="5.3.3.2" evidence="1"/>
<dbReference type="EMBL" id="CP000725">
    <property type="protein sequence ID" value="ABV10499.1"/>
    <property type="molecule type" value="Genomic_DNA"/>
</dbReference>
<dbReference type="SMR" id="A8AUV1"/>
<dbReference type="STRING" id="467705.SGO_0242"/>
<dbReference type="KEGG" id="sgo:SGO_0242"/>
<dbReference type="eggNOG" id="COG1304">
    <property type="taxonomic scope" value="Bacteria"/>
</dbReference>
<dbReference type="HOGENOM" id="CLU_065515_0_0_9"/>
<dbReference type="Proteomes" id="UP000001131">
    <property type="component" value="Chromosome"/>
</dbReference>
<dbReference type="GO" id="GO:0005737">
    <property type="term" value="C:cytoplasm"/>
    <property type="evidence" value="ECO:0007669"/>
    <property type="project" value="UniProtKB-SubCell"/>
</dbReference>
<dbReference type="GO" id="GO:0010181">
    <property type="term" value="F:FMN binding"/>
    <property type="evidence" value="ECO:0007669"/>
    <property type="project" value="UniProtKB-UniRule"/>
</dbReference>
<dbReference type="GO" id="GO:0004452">
    <property type="term" value="F:isopentenyl-diphosphate delta-isomerase activity"/>
    <property type="evidence" value="ECO:0007669"/>
    <property type="project" value="UniProtKB-UniRule"/>
</dbReference>
<dbReference type="GO" id="GO:0000287">
    <property type="term" value="F:magnesium ion binding"/>
    <property type="evidence" value="ECO:0007669"/>
    <property type="project" value="UniProtKB-UniRule"/>
</dbReference>
<dbReference type="GO" id="GO:0070402">
    <property type="term" value="F:NADPH binding"/>
    <property type="evidence" value="ECO:0007669"/>
    <property type="project" value="UniProtKB-UniRule"/>
</dbReference>
<dbReference type="GO" id="GO:0016491">
    <property type="term" value="F:oxidoreductase activity"/>
    <property type="evidence" value="ECO:0007669"/>
    <property type="project" value="InterPro"/>
</dbReference>
<dbReference type="GO" id="GO:0008299">
    <property type="term" value="P:isoprenoid biosynthetic process"/>
    <property type="evidence" value="ECO:0007669"/>
    <property type="project" value="UniProtKB-UniRule"/>
</dbReference>
<dbReference type="CDD" id="cd02811">
    <property type="entry name" value="IDI-2_FMN"/>
    <property type="match status" value="1"/>
</dbReference>
<dbReference type="Gene3D" id="3.20.20.70">
    <property type="entry name" value="Aldolase class I"/>
    <property type="match status" value="1"/>
</dbReference>
<dbReference type="HAMAP" id="MF_00354">
    <property type="entry name" value="Idi_2"/>
    <property type="match status" value="1"/>
</dbReference>
<dbReference type="InterPro" id="IPR013785">
    <property type="entry name" value="Aldolase_TIM"/>
</dbReference>
<dbReference type="InterPro" id="IPR000262">
    <property type="entry name" value="FMN-dep_DH"/>
</dbReference>
<dbReference type="InterPro" id="IPR011179">
    <property type="entry name" value="IPdP_isomerase"/>
</dbReference>
<dbReference type="NCBIfam" id="TIGR02151">
    <property type="entry name" value="IPP_isom_2"/>
    <property type="match status" value="1"/>
</dbReference>
<dbReference type="PANTHER" id="PTHR43665">
    <property type="entry name" value="ISOPENTENYL-DIPHOSPHATE DELTA-ISOMERASE"/>
    <property type="match status" value="1"/>
</dbReference>
<dbReference type="PANTHER" id="PTHR43665:SF1">
    <property type="entry name" value="ISOPENTENYL-DIPHOSPHATE DELTA-ISOMERASE"/>
    <property type="match status" value="1"/>
</dbReference>
<dbReference type="Pfam" id="PF01070">
    <property type="entry name" value="FMN_dh"/>
    <property type="match status" value="1"/>
</dbReference>
<dbReference type="PIRSF" id="PIRSF003314">
    <property type="entry name" value="IPP_isomerase"/>
    <property type="match status" value="1"/>
</dbReference>
<dbReference type="SUPFAM" id="SSF51395">
    <property type="entry name" value="FMN-linked oxidoreductases"/>
    <property type="match status" value="1"/>
</dbReference>
<gene>
    <name evidence="1" type="primary">fni</name>
    <name type="ordered locus">SGO_0242</name>
</gene>